<feature type="chain" id="PRO_0000421037" description="Glucosamine 6-phosphate N-acetyltransferase">
    <location>
        <begin position="1"/>
        <end position="149"/>
    </location>
</feature>
<feature type="domain" description="N-acetyltransferase" evidence="3">
    <location>
        <begin position="5"/>
        <end position="149"/>
    </location>
</feature>
<feature type="binding site" evidence="2">
    <location>
        <position position="27"/>
    </location>
    <ligand>
        <name>substrate</name>
    </ligand>
</feature>
<feature type="binding site" evidence="2">
    <location>
        <begin position="75"/>
        <end position="78"/>
    </location>
    <ligand>
        <name>substrate</name>
    </ligand>
</feature>
<feature type="binding site" evidence="2">
    <location>
        <begin position="87"/>
        <end position="89"/>
    </location>
    <ligand>
        <name>substrate</name>
    </ligand>
</feature>
<feature type="binding site" evidence="2">
    <location>
        <begin position="97"/>
        <end position="102"/>
    </location>
    <ligand>
        <name>acetyl-CoA</name>
        <dbReference type="ChEBI" id="CHEBI:57288"/>
    </ligand>
</feature>
<feature type="binding site" evidence="2">
    <location>
        <begin position="118"/>
        <end position="119"/>
    </location>
    <ligand>
        <name>substrate</name>
    </ligand>
</feature>
<feature type="binding site" evidence="2">
    <location>
        <begin position="132"/>
        <end position="134"/>
    </location>
    <ligand>
        <name>acetyl-CoA</name>
        <dbReference type="ChEBI" id="CHEBI:57288"/>
    </ligand>
</feature>
<feature type="mutagenesis site" description="In lig; reduces activity 2-fold. Retarded growth." evidence="5">
    <original>G</original>
    <variation>S</variation>
    <location>
        <position position="68"/>
    </location>
</feature>
<feature type="strand" evidence="8">
    <location>
        <begin position="5"/>
        <end position="9"/>
    </location>
</feature>
<feature type="helix" evidence="8">
    <location>
        <begin position="12"/>
        <end position="16"/>
    </location>
</feature>
<feature type="helix" evidence="8">
    <location>
        <begin position="19"/>
        <end position="23"/>
    </location>
</feature>
<feature type="turn" evidence="8">
    <location>
        <begin position="24"/>
        <end position="26"/>
    </location>
</feature>
<feature type="helix" evidence="8">
    <location>
        <begin position="34"/>
        <end position="45"/>
    </location>
</feature>
<feature type="helix" evidence="8">
    <location>
        <begin position="46"/>
        <end position="50"/>
    </location>
</feature>
<feature type="strand" evidence="8">
    <location>
        <begin position="51"/>
        <end position="58"/>
    </location>
</feature>
<feature type="turn" evidence="8">
    <location>
        <begin position="59"/>
        <end position="62"/>
    </location>
</feature>
<feature type="strand" evidence="8">
    <location>
        <begin position="63"/>
        <end position="74"/>
    </location>
</feature>
<feature type="helix" evidence="8">
    <location>
        <begin position="77"/>
        <end position="80"/>
    </location>
</feature>
<feature type="strand" evidence="8">
    <location>
        <begin position="82"/>
        <end position="91"/>
    </location>
</feature>
<feature type="helix" evidence="8">
    <location>
        <begin position="93"/>
        <end position="95"/>
    </location>
</feature>
<feature type="helix" evidence="8">
    <location>
        <begin position="100"/>
        <end position="114"/>
    </location>
</feature>
<feature type="strand" evidence="8">
    <location>
        <begin position="118"/>
        <end position="121"/>
    </location>
</feature>
<feature type="helix" evidence="8">
    <location>
        <begin position="126"/>
        <end position="128"/>
    </location>
</feature>
<feature type="helix" evidence="8">
    <location>
        <begin position="129"/>
        <end position="133"/>
    </location>
</feature>
<feature type="turn" evidence="8">
    <location>
        <begin position="134"/>
        <end position="136"/>
    </location>
</feature>
<accession>Q9LFU9</accession>
<organism>
    <name type="scientific">Arabidopsis thaliana</name>
    <name type="common">Mouse-ear cress</name>
    <dbReference type="NCBI Taxonomy" id="3702"/>
    <lineage>
        <taxon>Eukaryota</taxon>
        <taxon>Viridiplantae</taxon>
        <taxon>Streptophyta</taxon>
        <taxon>Embryophyta</taxon>
        <taxon>Tracheophyta</taxon>
        <taxon>Spermatophyta</taxon>
        <taxon>Magnoliopsida</taxon>
        <taxon>eudicotyledons</taxon>
        <taxon>Gunneridae</taxon>
        <taxon>Pentapetalae</taxon>
        <taxon>rosids</taxon>
        <taxon>malvids</taxon>
        <taxon>Brassicales</taxon>
        <taxon>Brassicaceae</taxon>
        <taxon>Camelineae</taxon>
        <taxon>Arabidopsis</taxon>
    </lineage>
</organism>
<dbReference type="EC" id="2.3.1.4" evidence="4"/>
<dbReference type="EMBL" id="AL391144">
    <property type="protein sequence ID" value="CAC01776.1"/>
    <property type="molecule type" value="Genomic_DNA"/>
</dbReference>
<dbReference type="EMBL" id="CP002688">
    <property type="protein sequence ID" value="AED92203.1"/>
    <property type="molecule type" value="Genomic_DNA"/>
</dbReference>
<dbReference type="PIR" id="T51406">
    <property type="entry name" value="T51406"/>
</dbReference>
<dbReference type="RefSeq" id="NP_197081.1">
    <property type="nucleotide sequence ID" value="NM_121582.2"/>
</dbReference>
<dbReference type="PDB" id="3T90">
    <property type="method" value="X-ray"/>
    <property type="resolution" value="1.50 A"/>
    <property type="chains" value="A=1-149"/>
</dbReference>
<dbReference type="PDBsum" id="3T90"/>
<dbReference type="SMR" id="Q9LFU9"/>
<dbReference type="BioGRID" id="16709">
    <property type="interactions" value="3"/>
</dbReference>
<dbReference type="FunCoup" id="Q9LFU9">
    <property type="interactions" value="2078"/>
</dbReference>
<dbReference type="IntAct" id="Q9LFU9">
    <property type="interactions" value="3"/>
</dbReference>
<dbReference type="STRING" id="3702.Q9LFU9"/>
<dbReference type="PaxDb" id="3702-AT5G15770.1"/>
<dbReference type="ProteomicsDB" id="247010"/>
<dbReference type="DNASU" id="831433"/>
<dbReference type="EnsemblPlants" id="AT5G15770.1">
    <property type="protein sequence ID" value="AT5G15770.1"/>
    <property type="gene ID" value="AT5G15770"/>
</dbReference>
<dbReference type="GeneID" id="831433"/>
<dbReference type="Gramene" id="AT5G15770.1">
    <property type="protein sequence ID" value="AT5G15770.1"/>
    <property type="gene ID" value="AT5G15770"/>
</dbReference>
<dbReference type="KEGG" id="ath:AT5G15770"/>
<dbReference type="Araport" id="AT5G15770"/>
<dbReference type="TAIR" id="AT5G15770">
    <property type="gene designation" value="GNA1"/>
</dbReference>
<dbReference type="eggNOG" id="KOG3396">
    <property type="taxonomic scope" value="Eukaryota"/>
</dbReference>
<dbReference type="HOGENOM" id="CLU_072095_3_0_1"/>
<dbReference type="InParanoid" id="Q9LFU9"/>
<dbReference type="OMA" id="NQRYDWI"/>
<dbReference type="OrthoDB" id="10039976at2759"/>
<dbReference type="PhylomeDB" id="Q9LFU9"/>
<dbReference type="BRENDA" id="2.3.1.4">
    <property type="organism ID" value="399"/>
</dbReference>
<dbReference type="UniPathway" id="UPA00113">
    <property type="reaction ID" value="UER00529"/>
</dbReference>
<dbReference type="EvolutionaryTrace" id="Q9LFU9"/>
<dbReference type="PRO" id="PR:Q9LFU9"/>
<dbReference type="Proteomes" id="UP000006548">
    <property type="component" value="Chromosome 5"/>
</dbReference>
<dbReference type="ExpressionAtlas" id="Q9LFU9">
    <property type="expression patterns" value="baseline and differential"/>
</dbReference>
<dbReference type="GO" id="GO:0005783">
    <property type="term" value="C:endoplasmic reticulum"/>
    <property type="evidence" value="ECO:0000314"/>
    <property type="project" value="TAIR"/>
</dbReference>
<dbReference type="GO" id="GO:0005789">
    <property type="term" value="C:endoplasmic reticulum membrane"/>
    <property type="evidence" value="ECO:0007669"/>
    <property type="project" value="UniProtKB-SubCell"/>
</dbReference>
<dbReference type="GO" id="GO:0004343">
    <property type="term" value="F:glucosamine 6-phosphate N-acetyltransferase activity"/>
    <property type="evidence" value="ECO:0000314"/>
    <property type="project" value="TAIR"/>
</dbReference>
<dbReference type="GO" id="GO:0006044">
    <property type="term" value="P:N-acetylglucosamine metabolic process"/>
    <property type="evidence" value="ECO:0000314"/>
    <property type="project" value="TAIR"/>
</dbReference>
<dbReference type="GO" id="GO:0006048">
    <property type="term" value="P:UDP-N-acetylglucosamine biosynthetic process"/>
    <property type="evidence" value="ECO:0007669"/>
    <property type="project" value="UniProtKB-UniPathway"/>
</dbReference>
<dbReference type="CDD" id="cd04301">
    <property type="entry name" value="NAT_SF"/>
    <property type="match status" value="1"/>
</dbReference>
<dbReference type="FunFam" id="3.40.630.30:FF:000048">
    <property type="entry name" value="Glucosamine 6-phosphate N-acetyltransferase"/>
    <property type="match status" value="1"/>
</dbReference>
<dbReference type="Gene3D" id="3.40.630.30">
    <property type="match status" value="1"/>
</dbReference>
<dbReference type="InterPro" id="IPR016181">
    <property type="entry name" value="Acyl_CoA_acyltransferase"/>
</dbReference>
<dbReference type="InterPro" id="IPR000182">
    <property type="entry name" value="GNAT_dom"/>
</dbReference>
<dbReference type="InterPro" id="IPR039143">
    <property type="entry name" value="GNPNAT1-like"/>
</dbReference>
<dbReference type="PANTHER" id="PTHR13355">
    <property type="entry name" value="GLUCOSAMINE 6-PHOSPHATE N-ACETYLTRANSFERASE"/>
    <property type="match status" value="1"/>
</dbReference>
<dbReference type="PANTHER" id="PTHR13355:SF11">
    <property type="entry name" value="GLUCOSAMINE 6-PHOSPHATE N-ACETYLTRANSFERASE"/>
    <property type="match status" value="1"/>
</dbReference>
<dbReference type="Pfam" id="PF00583">
    <property type="entry name" value="Acetyltransf_1"/>
    <property type="match status" value="1"/>
</dbReference>
<dbReference type="SUPFAM" id="SSF55729">
    <property type="entry name" value="Acyl-CoA N-acyltransferases (Nat)"/>
    <property type="match status" value="1"/>
</dbReference>
<dbReference type="PROSITE" id="PS51186">
    <property type="entry name" value="GNAT"/>
    <property type="match status" value="1"/>
</dbReference>
<proteinExistence type="evidence at protein level"/>
<keyword id="KW-0002">3D-structure</keyword>
<keyword id="KW-0012">Acyltransferase</keyword>
<keyword id="KW-0256">Endoplasmic reticulum</keyword>
<keyword id="KW-0472">Membrane</keyword>
<keyword id="KW-1185">Reference proteome</keyword>
<keyword id="KW-0808">Transferase</keyword>
<evidence type="ECO:0000250" key="1"/>
<evidence type="ECO:0000250" key="2">
    <source>
        <dbReference type="UniProtKB" id="Q96EK6"/>
    </source>
</evidence>
<evidence type="ECO:0000255" key="3">
    <source>
        <dbReference type="PROSITE-ProRule" id="PRU00532"/>
    </source>
</evidence>
<evidence type="ECO:0000269" key="4">
    <source>
    </source>
</evidence>
<evidence type="ECO:0000269" key="5">
    <source>
    </source>
</evidence>
<evidence type="ECO:0000305" key="6"/>
<evidence type="ECO:0000305" key="7">
    <source>
    </source>
</evidence>
<evidence type="ECO:0007829" key="8">
    <source>
        <dbReference type="PDB" id="3T90"/>
    </source>
</evidence>
<comment type="function">
    <text evidence="4 5">Acetyltransferase involved in UDP-N-acetylglucosamine (UDP-GlcNAc) biosynthesis. UDP-GlcNAc is an essential metabolite that serves as an initial sugar donor for N-glycan synthesis and thus plays an important role in protein and lipid glycosylation.</text>
</comment>
<comment type="catalytic activity">
    <reaction evidence="4">
        <text>D-glucosamine 6-phosphate + acetyl-CoA = N-acetyl-D-glucosamine 6-phosphate + CoA + H(+)</text>
        <dbReference type="Rhea" id="RHEA:10292"/>
        <dbReference type="ChEBI" id="CHEBI:15378"/>
        <dbReference type="ChEBI" id="CHEBI:57287"/>
        <dbReference type="ChEBI" id="CHEBI:57288"/>
        <dbReference type="ChEBI" id="CHEBI:57513"/>
        <dbReference type="ChEBI" id="CHEBI:58725"/>
        <dbReference type="EC" id="2.3.1.4"/>
    </reaction>
</comment>
<comment type="biophysicochemical properties">
    <kinetics>
        <KM evidence="4">33 uM for acetyl-coenzyme A</KM>
        <KM evidence="4">231 uM for glucosamine-6-phosphate</KM>
    </kinetics>
    <phDependence>
        <text evidence="4">Optimum pH is 7.0-8.0.</text>
    </phDependence>
    <temperatureDependence>
        <text evidence="4">Optimum temperature is 35 degrees Celsius.</text>
    </temperatureDependence>
</comment>
<comment type="pathway">
    <text>Nucleotide-sugar biosynthesis; UDP-N-acetyl-alpha-D-glucosamine biosynthesis; N-acetyl-alpha-D-glucosamine 1-phosphate from alpha-D-glucosamine 6-phosphate (route I): step 1/2.</text>
</comment>
<comment type="subunit">
    <text evidence="1">Homodimer.</text>
</comment>
<comment type="subcellular location">
    <subcellularLocation>
        <location evidence="4">Endoplasmic reticulum membrane</location>
        <topology evidence="4">Peripheral membrane protein</topology>
    </subcellularLocation>
</comment>
<comment type="tissue specificity">
    <text evidence="4">Expressed in roots, leaves, stems, cauline leaves, flowers and siliques.</text>
</comment>
<comment type="disruption phenotype">
    <text evidence="5">Retarded vegetative growth, delayed flowering and short and thick inflorescence stems and siliques.</text>
</comment>
<comment type="miscellaneous">
    <text evidence="7">The mutant lignescens (lig) was originally isolated as a temperature-sensitive mutant that exhibits ectopic lignin deposition and growth defects under high-temperature conditions.</text>
</comment>
<comment type="similarity">
    <text evidence="6">Belongs to the acetyltransferase family. GNA1 subfamily.</text>
</comment>
<name>GNA1_ARATH</name>
<reference key="1">
    <citation type="journal article" date="2000" name="Nature">
        <title>Sequence and analysis of chromosome 5 of the plant Arabidopsis thaliana.</title>
        <authorList>
            <person name="Tabata S."/>
            <person name="Kaneko T."/>
            <person name="Nakamura Y."/>
            <person name="Kotani H."/>
            <person name="Kato T."/>
            <person name="Asamizu E."/>
            <person name="Miyajima N."/>
            <person name="Sasamoto S."/>
            <person name="Kimura T."/>
            <person name="Hosouchi T."/>
            <person name="Kawashima K."/>
            <person name="Kohara M."/>
            <person name="Matsumoto M."/>
            <person name="Matsuno A."/>
            <person name="Muraki A."/>
            <person name="Nakayama S."/>
            <person name="Nakazaki N."/>
            <person name="Naruo K."/>
            <person name="Okumura S."/>
            <person name="Shinpo S."/>
            <person name="Takeuchi C."/>
            <person name="Wada T."/>
            <person name="Watanabe A."/>
            <person name="Yamada M."/>
            <person name="Yasuda M."/>
            <person name="Sato S."/>
            <person name="de la Bastide M."/>
            <person name="Huang E."/>
            <person name="Spiegel L."/>
            <person name="Gnoj L."/>
            <person name="O'Shaughnessy A."/>
            <person name="Preston R."/>
            <person name="Habermann K."/>
            <person name="Murray J."/>
            <person name="Johnson D."/>
            <person name="Rohlfing T."/>
            <person name="Nelson J."/>
            <person name="Stoneking T."/>
            <person name="Pepin K."/>
            <person name="Spieth J."/>
            <person name="Sekhon M."/>
            <person name="Armstrong J."/>
            <person name="Becker M."/>
            <person name="Belter E."/>
            <person name="Cordum H."/>
            <person name="Cordes M."/>
            <person name="Courtney L."/>
            <person name="Courtney W."/>
            <person name="Dante M."/>
            <person name="Du H."/>
            <person name="Edwards J."/>
            <person name="Fryman J."/>
            <person name="Haakensen B."/>
            <person name="Lamar E."/>
            <person name="Latreille P."/>
            <person name="Leonard S."/>
            <person name="Meyer R."/>
            <person name="Mulvaney E."/>
            <person name="Ozersky P."/>
            <person name="Riley A."/>
            <person name="Strowmatt C."/>
            <person name="Wagner-McPherson C."/>
            <person name="Wollam A."/>
            <person name="Yoakum M."/>
            <person name="Bell M."/>
            <person name="Dedhia N."/>
            <person name="Parnell L."/>
            <person name="Shah R."/>
            <person name="Rodriguez M."/>
            <person name="Hoon See L."/>
            <person name="Vil D."/>
            <person name="Baker J."/>
            <person name="Kirchoff K."/>
            <person name="Toth K."/>
            <person name="King L."/>
            <person name="Bahret A."/>
            <person name="Miller B."/>
            <person name="Marra M.A."/>
            <person name="Martienssen R."/>
            <person name="McCombie W.R."/>
            <person name="Wilson R.K."/>
            <person name="Murphy G."/>
            <person name="Bancroft I."/>
            <person name="Volckaert G."/>
            <person name="Wambutt R."/>
            <person name="Duesterhoeft A."/>
            <person name="Stiekema W."/>
            <person name="Pohl T."/>
            <person name="Entian K.-D."/>
            <person name="Terryn N."/>
            <person name="Hartley N."/>
            <person name="Bent E."/>
            <person name="Johnson S."/>
            <person name="Langham S.-A."/>
            <person name="McCullagh B."/>
            <person name="Robben J."/>
            <person name="Grymonprez B."/>
            <person name="Zimmermann W."/>
            <person name="Ramsperger U."/>
            <person name="Wedler H."/>
            <person name="Balke K."/>
            <person name="Wedler E."/>
            <person name="Peters S."/>
            <person name="van Staveren M."/>
            <person name="Dirkse W."/>
            <person name="Mooijman P."/>
            <person name="Klein Lankhorst R."/>
            <person name="Weitzenegger T."/>
            <person name="Bothe G."/>
            <person name="Rose M."/>
            <person name="Hauf J."/>
            <person name="Berneiser S."/>
            <person name="Hempel S."/>
            <person name="Feldpausch M."/>
            <person name="Lamberth S."/>
            <person name="Villarroel R."/>
            <person name="Gielen J."/>
            <person name="Ardiles W."/>
            <person name="Bents O."/>
            <person name="Lemcke K."/>
            <person name="Kolesov G."/>
            <person name="Mayer K.F.X."/>
            <person name="Rudd S."/>
            <person name="Schoof H."/>
            <person name="Schueller C."/>
            <person name="Zaccaria P."/>
            <person name="Mewes H.-W."/>
            <person name="Bevan M."/>
            <person name="Fransz P.F."/>
        </authorList>
    </citation>
    <scope>NUCLEOTIDE SEQUENCE [LARGE SCALE GENOMIC DNA]</scope>
    <source>
        <strain>cv. Columbia</strain>
    </source>
</reference>
<reference key="2">
    <citation type="journal article" date="2017" name="Plant J.">
        <title>Araport11: a complete reannotation of the Arabidopsis thaliana reference genome.</title>
        <authorList>
            <person name="Cheng C.Y."/>
            <person name="Krishnakumar V."/>
            <person name="Chan A.P."/>
            <person name="Thibaud-Nissen F."/>
            <person name="Schobel S."/>
            <person name="Town C.D."/>
        </authorList>
    </citation>
    <scope>GENOME REANNOTATION</scope>
    <source>
        <strain>cv. Columbia</strain>
    </source>
</reference>
<reference key="3">
    <citation type="journal article" date="2012" name="Plant Cell">
        <title>A missense mutation in the glucosamine-6-phosphate N-acetyltransferase-encoding gene causes temperature-dependent growth defects and ectopic lignin deposition in Arabidopsis.</title>
        <authorList>
            <person name="Nozaki M."/>
            <person name="Sugiyama M."/>
            <person name="Duan J."/>
            <person name="Uematsu H."/>
            <person name="Genda T."/>
            <person name="Sato Y."/>
        </authorList>
    </citation>
    <scope>FUNCTION</scope>
    <scope>DISRUPTION PHENOTYPE</scope>
    <scope>MUTAGENESIS OF GLY-68</scope>
    <source>
        <strain>cv. Landsberg erecta</strain>
    </source>
</reference>
<reference key="4">
    <citation type="journal article" date="2012" name="Biochem. J.">
        <title>Crystal structure and functional characterization of a glucosamine-6-phosphate N-acetyltransferase from Arabidopsis thaliana.</title>
        <authorList>
            <person name="Riegler H."/>
            <person name="Herter T."/>
            <person name="Grishkovskaya I."/>
            <person name="Lude A."/>
            <person name="Ryngajllo M."/>
            <person name="Bolger M.E."/>
            <person name="Essigmann B."/>
            <person name="Usadel B."/>
        </authorList>
    </citation>
    <scope>X-RAY CRYSTALLOGRAPHY (1.50 ANGSTROMS)</scope>
    <scope>FUNCTION</scope>
    <scope>CATALYTIC ACTIVITY</scope>
    <scope>BIOPHYSICOCHEMICAL PROPERTIES</scope>
    <scope>SUBCELLULAR LOCATION</scope>
    <scope>TISSUE SPECIFICITY</scope>
</reference>
<sequence length="149" mass="17028">MAETFKIRKLEISDKRKGFIELLGQLTVTGSVTDEEFDRRFEEIRSYGDDHVICVIEEETSGKIAATGSVMIEKKFLRNCGKAGHIEDVVVDSRFRGKQLGKKVVEFLMDHCKSMGCYKVILDCSVENKVFYEKCGMSNKSIQMSKYFD</sequence>
<protein>
    <recommendedName>
        <fullName>Glucosamine 6-phosphate N-acetyltransferase</fullName>
        <ecNumber evidence="4">2.3.1.4</ecNumber>
    </recommendedName>
    <alternativeName>
        <fullName>Glucose-6-phosphate acetyltransferase 1</fullName>
        <shortName>AtGNA1</shortName>
    </alternativeName>
    <alternativeName>
        <fullName>Phosphoglucosamine acetylase</fullName>
    </alternativeName>
    <alternativeName>
        <fullName>Phosphoglucosamine transacetylase</fullName>
    </alternativeName>
    <alternativeName>
        <fullName>Protein LIGNESCENS</fullName>
    </alternativeName>
</protein>
<gene>
    <name type="primary">GNA1</name>
    <name type="ordered locus">At5g15770</name>
    <name type="ORF">F14F8.150</name>
</gene>